<accession>Q03326</accession>
<reference key="1">
    <citation type="journal article" date="1993" name="J. Bacteriol.">
        <title>The unstable melC operon of Streptomyces antibioticus is codeleted with a Tn4811-homologous locus.</title>
        <authorList>
            <person name="Yu T.-W."/>
            <person name="Chen C.W."/>
        </authorList>
    </citation>
    <scope>NUCLEOTIDE SEQUENCE [GENOMIC DNA]</scope>
    <source>
        <strain>DSM 41481 / IMRU 3720</strain>
    </source>
</reference>
<protein>
    <recommendedName>
        <fullName>Probable oxidoreductase</fullName>
        <ecNumber>1.-.-.-</ecNumber>
    </recommendedName>
</protein>
<feature type="chain" id="PRO_0000054737" description="Probable oxidoreductase">
    <location>
        <begin position="1"/>
        <end position="298"/>
    </location>
</feature>
<feature type="active site" description="Proton acceptor" evidence="2">
    <location>
        <position position="165"/>
    </location>
</feature>
<feature type="binding site" evidence="1">
    <location>
        <begin position="9"/>
        <end position="33"/>
    </location>
    <ligand>
        <name>NAD(+)</name>
        <dbReference type="ChEBI" id="CHEBI:57540"/>
    </ligand>
</feature>
<feature type="binding site" evidence="1">
    <location>
        <position position="139"/>
    </location>
    <ligand>
        <name>substrate</name>
    </ligand>
</feature>
<comment type="similarity">
    <text evidence="3">Belongs to the short-chain dehydrogenases/reductases (SDR) family.</text>
</comment>
<dbReference type="EC" id="1.-.-.-"/>
<dbReference type="EMBL" id="M96551">
    <property type="protein sequence ID" value="AAA26796.1"/>
    <property type="molecule type" value="Genomic_DNA"/>
</dbReference>
<dbReference type="PIR" id="A47089">
    <property type="entry name" value="A47089"/>
</dbReference>
<dbReference type="SMR" id="Q03326"/>
<dbReference type="STRING" id="1890.AFM16_00350"/>
<dbReference type="GO" id="GO:0016491">
    <property type="term" value="F:oxidoreductase activity"/>
    <property type="evidence" value="ECO:0007669"/>
    <property type="project" value="UniProtKB-KW"/>
</dbReference>
<dbReference type="CDD" id="cd05327">
    <property type="entry name" value="retinol-DH_like_SDR_c_like"/>
    <property type="match status" value="1"/>
</dbReference>
<dbReference type="FunFam" id="3.40.50.720:FF:000594">
    <property type="entry name" value="Short-chain oxidoreductase"/>
    <property type="match status" value="1"/>
</dbReference>
<dbReference type="Gene3D" id="3.40.50.720">
    <property type="entry name" value="NAD(P)-binding Rossmann-like Domain"/>
    <property type="match status" value="1"/>
</dbReference>
<dbReference type="InterPro" id="IPR036291">
    <property type="entry name" value="NAD(P)-bd_dom_sf"/>
</dbReference>
<dbReference type="InterPro" id="IPR020904">
    <property type="entry name" value="Sc_DH/Rdtase_CS"/>
</dbReference>
<dbReference type="InterPro" id="IPR002347">
    <property type="entry name" value="SDR_fam"/>
</dbReference>
<dbReference type="PANTHER" id="PTHR24320:SF148">
    <property type="entry name" value="NAD(P)-BINDING ROSSMANN-FOLD SUPERFAMILY PROTEIN"/>
    <property type="match status" value="1"/>
</dbReference>
<dbReference type="PANTHER" id="PTHR24320">
    <property type="entry name" value="RETINOL DEHYDROGENASE"/>
    <property type="match status" value="1"/>
</dbReference>
<dbReference type="Pfam" id="PF00106">
    <property type="entry name" value="adh_short"/>
    <property type="match status" value="1"/>
</dbReference>
<dbReference type="PRINTS" id="PR00081">
    <property type="entry name" value="GDHRDH"/>
</dbReference>
<dbReference type="SUPFAM" id="SSF51735">
    <property type="entry name" value="NAD(P)-binding Rossmann-fold domains"/>
    <property type="match status" value="1"/>
</dbReference>
<dbReference type="PROSITE" id="PS00061">
    <property type="entry name" value="ADH_SHORT"/>
    <property type="match status" value="1"/>
</dbReference>
<sequence>MDLTGRRAVVTGGASGLGAETVRALAAAGAEVTVATRRPLSAEPLVQELAAAGGAGRVTAEALDLSDPASVESFARAWRGPLDILVANAGIMALPTRTLAPNGWEMQLATNYLGHFALATGLHAALRDAGSARIVVVSSGAHLDAPFDFEDAHFARRPYDPWVAYGQSKAADVLFTVGARRWAADGITVNALNPGYILTRLQRHVDDETMRAFGVMDDQGNVKPLPYYKTPEQGAATSVLLAASPLLKGVTGRYFEDNQEARTVQGQEDQPGGVAAHALDPEAADRLWEYGTDALRAA</sequence>
<name>OXIR_STRAT</name>
<keyword id="KW-0560">Oxidoreductase</keyword>
<evidence type="ECO:0000250" key="1"/>
<evidence type="ECO:0000255" key="2">
    <source>
        <dbReference type="PROSITE-ProRule" id="PRU10001"/>
    </source>
</evidence>
<evidence type="ECO:0000305" key="3"/>
<organism>
    <name type="scientific">Streptomyces antibioticus</name>
    <dbReference type="NCBI Taxonomy" id="1890"/>
    <lineage>
        <taxon>Bacteria</taxon>
        <taxon>Bacillati</taxon>
        <taxon>Actinomycetota</taxon>
        <taxon>Actinomycetes</taxon>
        <taxon>Kitasatosporales</taxon>
        <taxon>Streptomycetaceae</taxon>
        <taxon>Streptomyces</taxon>
    </lineage>
</organism>
<proteinExistence type="inferred from homology"/>